<gene>
    <name type="primary">rhb1</name>
    <name type="ORF">SPBC428.16c</name>
</gene>
<feature type="chain" id="PRO_0000082712" description="GTP-binding protein rhb1">
    <location>
        <begin position="1"/>
        <end position="182"/>
    </location>
</feature>
<feature type="propeptide" id="PRO_0000281369" description="Removed in mature form" evidence="1">
    <location>
        <begin position="183"/>
        <end position="185"/>
    </location>
</feature>
<feature type="short sequence motif" description="Effector region">
    <location>
        <begin position="35"/>
        <end position="43"/>
    </location>
</feature>
<feature type="binding site" evidence="2">
    <location>
        <position position="16"/>
    </location>
    <ligand>
        <name>GTP</name>
        <dbReference type="ChEBI" id="CHEBI:37565"/>
    </ligand>
</feature>
<feature type="binding site" evidence="2">
    <location>
        <position position="18"/>
    </location>
    <ligand>
        <name>GTP</name>
        <dbReference type="ChEBI" id="CHEBI:37565"/>
    </ligand>
</feature>
<feature type="binding site" evidence="2">
    <location>
        <position position="19"/>
    </location>
    <ligand>
        <name>GTP</name>
        <dbReference type="ChEBI" id="CHEBI:37565"/>
    </ligand>
</feature>
<feature type="binding site" evidence="2">
    <location>
        <position position="20"/>
    </location>
    <ligand>
        <name>GTP</name>
        <dbReference type="ChEBI" id="CHEBI:37565"/>
    </ligand>
</feature>
<feature type="binding site" evidence="2">
    <location>
        <position position="20"/>
    </location>
    <ligand>
        <name>Mg(2+)</name>
        <dbReference type="ChEBI" id="CHEBI:18420"/>
    </ligand>
</feature>
<feature type="binding site" evidence="2">
    <location>
        <position position="21"/>
    </location>
    <ligand>
        <name>GTP</name>
        <dbReference type="ChEBI" id="CHEBI:37565"/>
    </ligand>
</feature>
<feature type="binding site" evidence="2">
    <location>
        <position position="32"/>
    </location>
    <ligand>
        <name>GTP</name>
        <dbReference type="ChEBI" id="CHEBI:37565"/>
    </ligand>
</feature>
<feature type="binding site" evidence="2">
    <location>
        <position position="35"/>
    </location>
    <ligand>
        <name>GTP</name>
        <dbReference type="ChEBI" id="CHEBI:37565"/>
    </ligand>
</feature>
<feature type="binding site" evidence="2">
    <location>
        <position position="38"/>
    </location>
    <ligand>
        <name>GTP</name>
        <dbReference type="ChEBI" id="CHEBI:37565"/>
    </ligand>
</feature>
<feature type="binding site" evidence="2">
    <location>
        <position position="38"/>
    </location>
    <ligand>
        <name>Mg(2+)</name>
        <dbReference type="ChEBI" id="CHEBI:18420"/>
    </ligand>
</feature>
<feature type="binding site" evidence="2">
    <location>
        <position position="119"/>
    </location>
    <ligand>
        <name>GTP</name>
        <dbReference type="ChEBI" id="CHEBI:37565"/>
    </ligand>
</feature>
<feature type="binding site" evidence="2">
    <location>
        <position position="122"/>
    </location>
    <ligand>
        <name>GTP</name>
        <dbReference type="ChEBI" id="CHEBI:37565"/>
    </ligand>
</feature>
<feature type="binding site" evidence="2">
    <location>
        <position position="150"/>
    </location>
    <ligand>
        <name>GTP</name>
        <dbReference type="ChEBI" id="CHEBI:37565"/>
    </ligand>
</feature>
<feature type="modified residue" description="Cysteine methyl ester" evidence="1">
    <location>
        <position position="182"/>
    </location>
</feature>
<feature type="lipid moiety-binding region" description="S-farnesyl cysteine" evidence="1">
    <location>
        <position position="182"/>
    </location>
</feature>
<sequence length="185" mass="20515">MAPIKSRRIAVLGSRSVGKSSLTVQYVENHFVESYYPTIENTFSKNIKYKGQEFATEIIDTAGQDEYSILNSKHSIGIHGYVLVYSITSKSSFEMVKIVRDKILNHTGTEWVPIVVVGNKSDLHMQRAVTAEEGKALANEWKCAWTEASARHNENVARAFELIISEIEKQANPSPPGDGKGCVIA</sequence>
<evidence type="ECO:0000250" key="1"/>
<evidence type="ECO:0000250" key="2">
    <source>
        <dbReference type="UniProtKB" id="Q15382"/>
    </source>
</evidence>
<evidence type="ECO:0000269" key="3">
    <source>
    </source>
</evidence>
<evidence type="ECO:0000305" key="4"/>
<protein>
    <recommendedName>
        <fullName>GTP-binding protein rhb1</fullName>
        <ecNumber evidence="2">3.6.5.-</ecNumber>
    </recommendedName>
    <alternativeName>
        <fullName>GTP-binding protein Rheb homolog</fullName>
    </alternativeName>
</protein>
<name>RHB1_SCHPO</name>
<comment type="function">
    <text evidence="2 3">Binds GTP and exhibits intrinsic GTPase activity (By similarity). Regulates entry into stationary phase when extracellular nitrogen levels are adequate for growth.</text>
</comment>
<comment type="catalytic activity">
    <reaction evidence="2">
        <text>GTP + H2O = GDP + phosphate + H(+)</text>
        <dbReference type="Rhea" id="RHEA:19669"/>
        <dbReference type="ChEBI" id="CHEBI:15377"/>
        <dbReference type="ChEBI" id="CHEBI:15378"/>
        <dbReference type="ChEBI" id="CHEBI:37565"/>
        <dbReference type="ChEBI" id="CHEBI:43474"/>
        <dbReference type="ChEBI" id="CHEBI:58189"/>
    </reaction>
    <physiologicalReaction direction="left-to-right" evidence="2">
        <dbReference type="Rhea" id="RHEA:19670"/>
    </physiologicalReaction>
</comment>
<comment type="subcellular location">
    <subcellularLocation>
        <location evidence="4">Cell membrane</location>
        <topology evidence="4">Lipid-anchor</topology>
        <orientation evidence="4">Cytoplasmic side</orientation>
    </subcellularLocation>
</comment>
<comment type="similarity">
    <text evidence="4">Belongs to the small GTPase superfamily. Rheb family.</text>
</comment>
<reference key="1">
    <citation type="journal article" date="2002" name="Nature">
        <title>The genome sequence of Schizosaccharomyces pombe.</title>
        <authorList>
            <person name="Wood V."/>
            <person name="Gwilliam R."/>
            <person name="Rajandream M.A."/>
            <person name="Lyne M.H."/>
            <person name="Lyne R."/>
            <person name="Stewart A."/>
            <person name="Sgouros J.G."/>
            <person name="Peat N."/>
            <person name="Hayles J."/>
            <person name="Baker S.G."/>
            <person name="Basham D."/>
            <person name="Bowman S."/>
            <person name="Brooks K."/>
            <person name="Brown D."/>
            <person name="Brown S."/>
            <person name="Chillingworth T."/>
            <person name="Churcher C.M."/>
            <person name="Collins M."/>
            <person name="Connor R."/>
            <person name="Cronin A."/>
            <person name="Davis P."/>
            <person name="Feltwell T."/>
            <person name="Fraser A."/>
            <person name="Gentles S."/>
            <person name="Goble A."/>
            <person name="Hamlin N."/>
            <person name="Harris D.E."/>
            <person name="Hidalgo J."/>
            <person name="Hodgson G."/>
            <person name="Holroyd S."/>
            <person name="Hornsby T."/>
            <person name="Howarth S."/>
            <person name="Huckle E.J."/>
            <person name="Hunt S."/>
            <person name="Jagels K."/>
            <person name="James K.D."/>
            <person name="Jones L."/>
            <person name="Jones M."/>
            <person name="Leather S."/>
            <person name="McDonald S."/>
            <person name="McLean J."/>
            <person name="Mooney P."/>
            <person name="Moule S."/>
            <person name="Mungall K.L."/>
            <person name="Murphy L.D."/>
            <person name="Niblett D."/>
            <person name="Odell C."/>
            <person name="Oliver K."/>
            <person name="O'Neil S."/>
            <person name="Pearson D."/>
            <person name="Quail M.A."/>
            <person name="Rabbinowitsch E."/>
            <person name="Rutherford K.M."/>
            <person name="Rutter S."/>
            <person name="Saunders D."/>
            <person name="Seeger K."/>
            <person name="Sharp S."/>
            <person name="Skelton J."/>
            <person name="Simmonds M.N."/>
            <person name="Squares R."/>
            <person name="Squares S."/>
            <person name="Stevens K."/>
            <person name="Taylor K."/>
            <person name="Taylor R.G."/>
            <person name="Tivey A."/>
            <person name="Walsh S.V."/>
            <person name="Warren T."/>
            <person name="Whitehead S."/>
            <person name="Woodward J.R."/>
            <person name="Volckaert G."/>
            <person name="Aert R."/>
            <person name="Robben J."/>
            <person name="Grymonprez B."/>
            <person name="Weltjens I."/>
            <person name="Vanstreels E."/>
            <person name="Rieger M."/>
            <person name="Schaefer M."/>
            <person name="Mueller-Auer S."/>
            <person name="Gabel C."/>
            <person name="Fuchs M."/>
            <person name="Duesterhoeft A."/>
            <person name="Fritzc C."/>
            <person name="Holzer E."/>
            <person name="Moestl D."/>
            <person name="Hilbert H."/>
            <person name="Borzym K."/>
            <person name="Langer I."/>
            <person name="Beck A."/>
            <person name="Lehrach H."/>
            <person name="Reinhardt R."/>
            <person name="Pohl T.M."/>
            <person name="Eger P."/>
            <person name="Zimmermann W."/>
            <person name="Wedler H."/>
            <person name="Wambutt R."/>
            <person name="Purnelle B."/>
            <person name="Goffeau A."/>
            <person name="Cadieu E."/>
            <person name="Dreano S."/>
            <person name="Gloux S."/>
            <person name="Lelaure V."/>
            <person name="Mottier S."/>
            <person name="Galibert F."/>
            <person name="Aves S.J."/>
            <person name="Xiang Z."/>
            <person name="Hunt C."/>
            <person name="Moore K."/>
            <person name="Hurst S.M."/>
            <person name="Lucas M."/>
            <person name="Rochet M."/>
            <person name="Gaillardin C."/>
            <person name="Tallada V.A."/>
            <person name="Garzon A."/>
            <person name="Thode G."/>
            <person name="Daga R.R."/>
            <person name="Cruzado L."/>
            <person name="Jimenez J."/>
            <person name="Sanchez M."/>
            <person name="del Rey F."/>
            <person name="Benito J."/>
            <person name="Dominguez A."/>
            <person name="Revuelta J.L."/>
            <person name="Moreno S."/>
            <person name="Armstrong J."/>
            <person name="Forsburg S.L."/>
            <person name="Cerutti L."/>
            <person name="Lowe T."/>
            <person name="McCombie W.R."/>
            <person name="Paulsen I."/>
            <person name="Potashkin J."/>
            <person name="Shpakovski G.V."/>
            <person name="Ussery D."/>
            <person name="Barrell B.G."/>
            <person name="Nurse P."/>
        </authorList>
    </citation>
    <scope>NUCLEOTIDE SEQUENCE [LARGE SCALE GENOMIC DNA]</scope>
    <source>
        <strain>972 / ATCC 24843</strain>
    </source>
</reference>
<reference key="2">
    <citation type="journal article" date="2000" name="Genetics">
        <title>Loss of Rhb1, a Rheb-related GTPase in fission yeast, causes growth arrest with a terminal phenotype similar to that caused by nitrogen starvation.</title>
        <authorList>
            <person name="Mach K.E."/>
            <person name="Furge K.A."/>
            <person name="Albright C.F."/>
        </authorList>
    </citation>
    <scope>FUNCTION</scope>
</reference>
<organism>
    <name type="scientific">Schizosaccharomyces pombe (strain 972 / ATCC 24843)</name>
    <name type="common">Fission yeast</name>
    <dbReference type="NCBI Taxonomy" id="284812"/>
    <lineage>
        <taxon>Eukaryota</taxon>
        <taxon>Fungi</taxon>
        <taxon>Dikarya</taxon>
        <taxon>Ascomycota</taxon>
        <taxon>Taphrinomycotina</taxon>
        <taxon>Schizosaccharomycetes</taxon>
        <taxon>Schizosaccharomycetales</taxon>
        <taxon>Schizosaccharomycetaceae</taxon>
        <taxon>Schizosaccharomyces</taxon>
    </lineage>
</organism>
<proteinExistence type="inferred from homology"/>
<keyword id="KW-1003">Cell membrane</keyword>
<keyword id="KW-0342">GTP-binding</keyword>
<keyword id="KW-0378">Hydrolase</keyword>
<keyword id="KW-0449">Lipoprotein</keyword>
<keyword id="KW-0460">Magnesium</keyword>
<keyword id="KW-0472">Membrane</keyword>
<keyword id="KW-0479">Metal-binding</keyword>
<keyword id="KW-0488">Methylation</keyword>
<keyword id="KW-0547">Nucleotide-binding</keyword>
<keyword id="KW-0636">Prenylation</keyword>
<keyword id="KW-1185">Reference proteome</keyword>
<dbReference type="EC" id="3.6.5.-" evidence="2"/>
<dbReference type="EMBL" id="CU329671">
    <property type="protein sequence ID" value="CAA22291.1"/>
    <property type="molecule type" value="Genomic_DNA"/>
</dbReference>
<dbReference type="PIR" id="T40468">
    <property type="entry name" value="T40468"/>
</dbReference>
<dbReference type="RefSeq" id="NP_595194.1">
    <property type="nucleotide sequence ID" value="NM_001021101.2"/>
</dbReference>
<dbReference type="SMR" id="O94363"/>
<dbReference type="BioGRID" id="277370">
    <property type="interactions" value="17"/>
</dbReference>
<dbReference type="FunCoup" id="O94363">
    <property type="interactions" value="274"/>
</dbReference>
<dbReference type="STRING" id="284812.O94363"/>
<dbReference type="iPTMnet" id="O94363"/>
<dbReference type="PaxDb" id="4896-SPBC428.16c.1"/>
<dbReference type="EnsemblFungi" id="SPBC428.16c.1">
    <property type="protein sequence ID" value="SPBC428.16c.1:pep"/>
    <property type="gene ID" value="SPBC428.16c"/>
</dbReference>
<dbReference type="GeneID" id="2540853"/>
<dbReference type="KEGG" id="spo:2540853"/>
<dbReference type="PomBase" id="SPBC428.16c">
    <property type="gene designation" value="rhb1"/>
</dbReference>
<dbReference type="VEuPathDB" id="FungiDB:SPBC428.16c"/>
<dbReference type="eggNOG" id="KOG0395">
    <property type="taxonomic scope" value="Eukaryota"/>
</dbReference>
<dbReference type="HOGENOM" id="CLU_041217_9_8_1"/>
<dbReference type="InParanoid" id="O94363"/>
<dbReference type="OMA" id="SARHNEN"/>
<dbReference type="PhylomeDB" id="O94363"/>
<dbReference type="Reactome" id="R-SPO-165159">
    <property type="pathway name" value="MTOR signalling"/>
</dbReference>
<dbReference type="Reactome" id="R-SPO-9639288">
    <property type="pathway name" value="Amino acids regulate mTORC1"/>
</dbReference>
<dbReference type="PRO" id="PR:O94363"/>
<dbReference type="Proteomes" id="UP000002485">
    <property type="component" value="Chromosome II"/>
</dbReference>
<dbReference type="GO" id="GO:0005829">
    <property type="term" value="C:cytosol"/>
    <property type="evidence" value="ECO:0007005"/>
    <property type="project" value="PomBase"/>
</dbReference>
<dbReference type="GO" id="GO:0031234">
    <property type="term" value="C:extrinsic component of cytoplasmic side of plasma membrane"/>
    <property type="evidence" value="ECO:0000266"/>
    <property type="project" value="PomBase"/>
</dbReference>
<dbReference type="GO" id="GO:0005634">
    <property type="term" value="C:nucleus"/>
    <property type="evidence" value="ECO:0007005"/>
    <property type="project" value="PomBase"/>
</dbReference>
<dbReference type="GO" id="GO:0005886">
    <property type="term" value="C:plasma membrane"/>
    <property type="evidence" value="ECO:0000318"/>
    <property type="project" value="GO_Central"/>
</dbReference>
<dbReference type="GO" id="GO:0019003">
    <property type="term" value="F:GDP binding"/>
    <property type="evidence" value="ECO:0000314"/>
    <property type="project" value="PomBase"/>
</dbReference>
<dbReference type="GO" id="GO:0005525">
    <property type="term" value="F:GTP binding"/>
    <property type="evidence" value="ECO:0000314"/>
    <property type="project" value="UniProtKB"/>
</dbReference>
<dbReference type="GO" id="GO:0003924">
    <property type="term" value="F:GTPase activity"/>
    <property type="evidence" value="ECO:0000314"/>
    <property type="project" value="UniProtKB"/>
</dbReference>
<dbReference type="GO" id="GO:0046872">
    <property type="term" value="F:metal ion binding"/>
    <property type="evidence" value="ECO:0007669"/>
    <property type="project" value="UniProtKB-KW"/>
</dbReference>
<dbReference type="GO" id="GO:0043539">
    <property type="term" value="F:protein serine/threonine kinase activator activity"/>
    <property type="evidence" value="ECO:0000316"/>
    <property type="project" value="PomBase"/>
</dbReference>
<dbReference type="GO" id="GO:1905589">
    <property type="term" value="P:positive regulation of L-arginine import across plasma membrane"/>
    <property type="evidence" value="ECO:0000316"/>
    <property type="project" value="PomBase"/>
</dbReference>
<dbReference type="GO" id="GO:1904263">
    <property type="term" value="P:positive regulation of TORC1 signaling"/>
    <property type="evidence" value="ECO:0000315"/>
    <property type="project" value="PomBase"/>
</dbReference>
<dbReference type="GO" id="GO:0007264">
    <property type="term" value="P:small GTPase-mediated signal transduction"/>
    <property type="evidence" value="ECO:0000318"/>
    <property type="project" value="GO_Central"/>
</dbReference>
<dbReference type="CDD" id="cd04137">
    <property type="entry name" value="RheB"/>
    <property type="match status" value="1"/>
</dbReference>
<dbReference type="FunFam" id="3.40.50.300:FF:000273">
    <property type="entry name" value="GTP-binding protein Rheb homolog"/>
    <property type="match status" value="1"/>
</dbReference>
<dbReference type="Gene3D" id="3.40.50.300">
    <property type="entry name" value="P-loop containing nucleotide triphosphate hydrolases"/>
    <property type="match status" value="1"/>
</dbReference>
<dbReference type="InterPro" id="IPR027417">
    <property type="entry name" value="P-loop_NTPase"/>
</dbReference>
<dbReference type="InterPro" id="IPR005225">
    <property type="entry name" value="Small_GTP-bd"/>
</dbReference>
<dbReference type="InterPro" id="IPR001806">
    <property type="entry name" value="Small_GTPase"/>
</dbReference>
<dbReference type="InterPro" id="IPR020849">
    <property type="entry name" value="Small_GTPase_Ras-type"/>
</dbReference>
<dbReference type="NCBIfam" id="TIGR00231">
    <property type="entry name" value="small_GTP"/>
    <property type="match status" value="1"/>
</dbReference>
<dbReference type="PANTHER" id="PTHR24070">
    <property type="entry name" value="RAS, DI-RAS, AND RHEB FAMILY MEMBERS OF SMALL GTPASE SUPERFAMILY"/>
    <property type="match status" value="1"/>
</dbReference>
<dbReference type="Pfam" id="PF00071">
    <property type="entry name" value="Ras"/>
    <property type="match status" value="1"/>
</dbReference>
<dbReference type="PRINTS" id="PR00449">
    <property type="entry name" value="RASTRNSFRMNG"/>
</dbReference>
<dbReference type="SMART" id="SM00175">
    <property type="entry name" value="RAB"/>
    <property type="match status" value="1"/>
</dbReference>
<dbReference type="SMART" id="SM00173">
    <property type="entry name" value="RAS"/>
    <property type="match status" value="1"/>
</dbReference>
<dbReference type="SMART" id="SM00174">
    <property type="entry name" value="RHO"/>
    <property type="match status" value="1"/>
</dbReference>
<dbReference type="SUPFAM" id="SSF52540">
    <property type="entry name" value="P-loop containing nucleoside triphosphate hydrolases"/>
    <property type="match status" value="1"/>
</dbReference>
<dbReference type="PROSITE" id="PS51421">
    <property type="entry name" value="RAS"/>
    <property type="match status" value="1"/>
</dbReference>
<accession>O94363</accession>